<reference key="1">
    <citation type="journal article" date="2006" name="BMC Plant Biol.">
        <title>The complete chloroplast genome sequence of Citrus sinensis (L.) Osbeck var 'Ridge Pineapple': organization and phylogenetic relationships to other angiosperms.</title>
        <authorList>
            <person name="Bausher M.G."/>
            <person name="Singh N.D."/>
            <person name="Lee S.-B."/>
            <person name="Jansen R.K."/>
            <person name="Daniell H."/>
        </authorList>
    </citation>
    <scope>NUCLEOTIDE SEQUENCE [LARGE SCALE GENOMIC DNA]</scope>
    <source>
        <strain>cv. Osbeck var. Ridge Pineapple</strain>
    </source>
</reference>
<protein>
    <recommendedName>
        <fullName evidence="1">Photosystem I assembly protein Ycf4</fullName>
    </recommendedName>
</protein>
<name>YCF4_CITSI</name>
<geneLocation type="chloroplast"/>
<comment type="function">
    <text evidence="1">Seems to be required for the assembly of the photosystem I complex.</text>
</comment>
<comment type="subcellular location">
    <subcellularLocation>
        <location evidence="1">Plastid</location>
        <location evidence="1">Chloroplast thylakoid membrane</location>
        <topology evidence="1">Multi-pass membrane protein</topology>
    </subcellularLocation>
</comment>
<comment type="similarity">
    <text evidence="1">Belongs to the Ycf4 family.</text>
</comment>
<dbReference type="EMBL" id="DQ864733">
    <property type="protein sequence ID" value="ABI49031.1"/>
    <property type="molecule type" value="Genomic_DNA"/>
</dbReference>
<dbReference type="RefSeq" id="YP_740486.1">
    <property type="nucleotide sequence ID" value="NC_008334.1"/>
</dbReference>
<dbReference type="GeneID" id="4271216"/>
<dbReference type="KEGG" id="cit:4271216"/>
<dbReference type="OrthoDB" id="778455at71240"/>
<dbReference type="GO" id="GO:0009535">
    <property type="term" value="C:chloroplast thylakoid membrane"/>
    <property type="evidence" value="ECO:0007669"/>
    <property type="project" value="UniProtKB-SubCell"/>
</dbReference>
<dbReference type="GO" id="GO:0009522">
    <property type="term" value="C:photosystem I"/>
    <property type="evidence" value="ECO:0007669"/>
    <property type="project" value="InterPro"/>
</dbReference>
<dbReference type="GO" id="GO:0015979">
    <property type="term" value="P:photosynthesis"/>
    <property type="evidence" value="ECO:0007669"/>
    <property type="project" value="UniProtKB-UniRule"/>
</dbReference>
<dbReference type="HAMAP" id="MF_00437">
    <property type="entry name" value="Ycf4"/>
    <property type="match status" value="1"/>
</dbReference>
<dbReference type="InterPro" id="IPR003359">
    <property type="entry name" value="PSI_Ycf4_assembly"/>
</dbReference>
<dbReference type="PANTHER" id="PTHR33288">
    <property type="match status" value="1"/>
</dbReference>
<dbReference type="PANTHER" id="PTHR33288:SF4">
    <property type="entry name" value="PHOTOSYSTEM I ASSEMBLY PROTEIN YCF4"/>
    <property type="match status" value="1"/>
</dbReference>
<dbReference type="Pfam" id="PF02392">
    <property type="entry name" value="Ycf4"/>
    <property type="match status" value="1"/>
</dbReference>
<proteinExistence type="inferred from homology"/>
<organism>
    <name type="scientific">Citrus sinensis</name>
    <name type="common">Sweet orange</name>
    <name type="synonym">Citrus aurantium var. sinensis</name>
    <dbReference type="NCBI Taxonomy" id="2711"/>
    <lineage>
        <taxon>Eukaryota</taxon>
        <taxon>Viridiplantae</taxon>
        <taxon>Streptophyta</taxon>
        <taxon>Embryophyta</taxon>
        <taxon>Tracheophyta</taxon>
        <taxon>Spermatophyta</taxon>
        <taxon>Magnoliopsida</taxon>
        <taxon>eudicotyledons</taxon>
        <taxon>Gunneridae</taxon>
        <taxon>Pentapetalae</taxon>
        <taxon>rosids</taxon>
        <taxon>malvids</taxon>
        <taxon>Sapindales</taxon>
        <taxon>Rutaceae</taxon>
        <taxon>Aurantioideae</taxon>
        <taxon>Citrus</taxon>
    </lineage>
</organism>
<sequence length="184" mass="21384">MSWRSEYIWVEFIAGSRKPGNFFWAFILFLGSLGFLVVGISSYLDRNLLSLFPSQQINFFPQGIVMSFYGIAGLFISSYLWCTIIWNVGSGYDRFDTKEGIVCIFRWGFPGKNRRIFLRFLMKDIQSIRIEVKEGIYARRVLYIESRGLGAIPLNRTDENLTPREIEQKAAELAYFLRVPIEGF</sequence>
<feature type="chain" id="PRO_0000275649" description="Photosystem I assembly protein Ycf4">
    <location>
        <begin position="1"/>
        <end position="184"/>
    </location>
</feature>
<feature type="transmembrane region" description="Helical" evidence="1">
    <location>
        <begin position="20"/>
        <end position="40"/>
    </location>
</feature>
<feature type="transmembrane region" description="Helical" evidence="1">
    <location>
        <begin position="64"/>
        <end position="84"/>
    </location>
</feature>
<keyword id="KW-0150">Chloroplast</keyword>
<keyword id="KW-0472">Membrane</keyword>
<keyword id="KW-0602">Photosynthesis</keyword>
<keyword id="KW-0934">Plastid</keyword>
<keyword id="KW-0793">Thylakoid</keyword>
<keyword id="KW-0812">Transmembrane</keyword>
<keyword id="KW-1133">Transmembrane helix</keyword>
<accession>Q09MG7</accession>
<gene>
    <name evidence="1" type="primary">ycf4</name>
</gene>
<evidence type="ECO:0000255" key="1">
    <source>
        <dbReference type="HAMAP-Rule" id="MF_00437"/>
    </source>
</evidence>